<organism>
    <name type="scientific">Shewanella baltica (strain OS185)</name>
    <dbReference type="NCBI Taxonomy" id="402882"/>
    <lineage>
        <taxon>Bacteria</taxon>
        <taxon>Pseudomonadati</taxon>
        <taxon>Pseudomonadota</taxon>
        <taxon>Gammaproteobacteria</taxon>
        <taxon>Alteromonadales</taxon>
        <taxon>Shewanellaceae</taxon>
        <taxon>Shewanella</taxon>
    </lineage>
</organism>
<sequence length="344" mass="38870">MLQALLDSKDFLALTLAHPEQFDGEFSFSLGDHTQVEVWDTGVIVFEPAQNEGKDVVLSCGVHGNETAPIELCNGLIKQLLQQKIIAKQRTLFLIGNPLAINNGTRIIDENMNRLFSGEHSNPPGLVNPERVRAKKLEAYIDRFYTAVADGRQRIHYDLHTAMRASKHEKFAIYPYRPGRAFSGEQIMFLAASGVDTVLFHHEPTTTFSYFSSERYGADAFTIELGKVYPMGQNDMTRFIATHEMFMRLITAKPLELDAFDADKVNLYQVCRVINKHFDDFEFTFATDVENFRSFPKGFVLAREGGQEIKVEHEFESVVFPNAKVPIGNRTVICLIPAVNADVR</sequence>
<accession>A6WNA1</accession>
<feature type="chain" id="PRO_1000017328" description="Succinylglutamate desuccinylase">
    <location>
        <begin position="1"/>
        <end position="344"/>
    </location>
</feature>
<feature type="active site" evidence="1">
    <location>
        <position position="224"/>
    </location>
</feature>
<feature type="binding site" evidence="1">
    <location>
        <position position="63"/>
    </location>
    <ligand>
        <name>Zn(2+)</name>
        <dbReference type="ChEBI" id="CHEBI:29105"/>
    </ligand>
</feature>
<feature type="binding site" evidence="1">
    <location>
        <position position="66"/>
    </location>
    <ligand>
        <name>Zn(2+)</name>
        <dbReference type="ChEBI" id="CHEBI:29105"/>
    </ligand>
</feature>
<feature type="binding site" evidence="1">
    <location>
        <position position="160"/>
    </location>
    <ligand>
        <name>Zn(2+)</name>
        <dbReference type="ChEBI" id="CHEBI:29105"/>
    </ligand>
</feature>
<name>ASTE_SHEB8</name>
<gene>
    <name evidence="1" type="primary">astE</name>
    <name type="ordered locus">Shew185_2148</name>
</gene>
<reference key="1">
    <citation type="submission" date="2007-07" db="EMBL/GenBank/DDBJ databases">
        <title>Complete sequence of chromosome of Shewanella baltica OS185.</title>
        <authorList>
            <consortium name="US DOE Joint Genome Institute"/>
            <person name="Copeland A."/>
            <person name="Lucas S."/>
            <person name="Lapidus A."/>
            <person name="Barry K."/>
            <person name="Glavina del Rio T."/>
            <person name="Dalin E."/>
            <person name="Tice H."/>
            <person name="Pitluck S."/>
            <person name="Sims D."/>
            <person name="Brettin T."/>
            <person name="Bruce D."/>
            <person name="Detter J.C."/>
            <person name="Han C."/>
            <person name="Schmutz J."/>
            <person name="Larimer F."/>
            <person name="Land M."/>
            <person name="Hauser L."/>
            <person name="Kyrpides N."/>
            <person name="Mikhailova N."/>
            <person name="Brettar I."/>
            <person name="Rodrigues J."/>
            <person name="Konstantinidis K."/>
            <person name="Tiedje J."/>
            <person name="Richardson P."/>
        </authorList>
    </citation>
    <scope>NUCLEOTIDE SEQUENCE [LARGE SCALE GENOMIC DNA]</scope>
    <source>
        <strain>OS185</strain>
    </source>
</reference>
<protein>
    <recommendedName>
        <fullName evidence="1">Succinylglutamate desuccinylase</fullName>
        <ecNumber evidence="1">3.5.1.96</ecNumber>
    </recommendedName>
</protein>
<keyword id="KW-0056">Arginine metabolism</keyword>
<keyword id="KW-0378">Hydrolase</keyword>
<keyword id="KW-0479">Metal-binding</keyword>
<keyword id="KW-0862">Zinc</keyword>
<evidence type="ECO:0000255" key="1">
    <source>
        <dbReference type="HAMAP-Rule" id="MF_00767"/>
    </source>
</evidence>
<comment type="function">
    <text evidence="1">Transforms N(2)-succinylglutamate into succinate and glutamate.</text>
</comment>
<comment type="catalytic activity">
    <reaction evidence="1">
        <text>N-succinyl-L-glutamate + H2O = L-glutamate + succinate</text>
        <dbReference type="Rhea" id="RHEA:15169"/>
        <dbReference type="ChEBI" id="CHEBI:15377"/>
        <dbReference type="ChEBI" id="CHEBI:29985"/>
        <dbReference type="ChEBI" id="CHEBI:30031"/>
        <dbReference type="ChEBI" id="CHEBI:58763"/>
        <dbReference type="EC" id="3.5.1.96"/>
    </reaction>
</comment>
<comment type="cofactor">
    <cofactor evidence="1">
        <name>Zn(2+)</name>
        <dbReference type="ChEBI" id="CHEBI:29105"/>
    </cofactor>
    <text evidence="1">Binds 1 zinc ion per subunit.</text>
</comment>
<comment type="pathway">
    <text evidence="1">Amino-acid degradation; L-arginine degradation via AST pathway; L-glutamate and succinate from L-arginine: step 5/5.</text>
</comment>
<comment type="similarity">
    <text evidence="1">Belongs to the AspA/AstE family. Succinylglutamate desuccinylase subfamily.</text>
</comment>
<proteinExistence type="inferred from homology"/>
<dbReference type="EC" id="3.5.1.96" evidence="1"/>
<dbReference type="EMBL" id="CP000753">
    <property type="protein sequence ID" value="ABS08290.1"/>
    <property type="molecule type" value="Genomic_DNA"/>
</dbReference>
<dbReference type="RefSeq" id="WP_012089196.1">
    <property type="nucleotide sequence ID" value="NC_009665.1"/>
</dbReference>
<dbReference type="SMR" id="A6WNA1"/>
<dbReference type="KEGG" id="sbm:Shew185_2148"/>
<dbReference type="HOGENOM" id="CLU_071608_0_0_6"/>
<dbReference type="UniPathway" id="UPA00185">
    <property type="reaction ID" value="UER00283"/>
</dbReference>
<dbReference type="GO" id="GO:0016788">
    <property type="term" value="F:hydrolase activity, acting on ester bonds"/>
    <property type="evidence" value="ECO:0007669"/>
    <property type="project" value="UniProtKB-UniRule"/>
</dbReference>
<dbReference type="GO" id="GO:0009017">
    <property type="term" value="F:succinylglutamate desuccinylase activity"/>
    <property type="evidence" value="ECO:0007669"/>
    <property type="project" value="UniProtKB-EC"/>
</dbReference>
<dbReference type="GO" id="GO:0008270">
    <property type="term" value="F:zinc ion binding"/>
    <property type="evidence" value="ECO:0007669"/>
    <property type="project" value="UniProtKB-UniRule"/>
</dbReference>
<dbReference type="GO" id="GO:0019544">
    <property type="term" value="P:arginine catabolic process to glutamate"/>
    <property type="evidence" value="ECO:0007669"/>
    <property type="project" value="UniProtKB-UniRule"/>
</dbReference>
<dbReference type="GO" id="GO:0019545">
    <property type="term" value="P:arginine catabolic process to succinate"/>
    <property type="evidence" value="ECO:0007669"/>
    <property type="project" value="UniProtKB-UniRule"/>
</dbReference>
<dbReference type="CDD" id="cd03855">
    <property type="entry name" value="M14_ASTE"/>
    <property type="match status" value="1"/>
</dbReference>
<dbReference type="Gene3D" id="3.40.630.10">
    <property type="entry name" value="Zn peptidases"/>
    <property type="match status" value="1"/>
</dbReference>
<dbReference type="HAMAP" id="MF_00767">
    <property type="entry name" value="Arg_catab_AstE"/>
    <property type="match status" value="1"/>
</dbReference>
<dbReference type="InterPro" id="IPR050178">
    <property type="entry name" value="AspA/AstE_fam"/>
</dbReference>
<dbReference type="InterPro" id="IPR055438">
    <property type="entry name" value="AstE_AspA_cat"/>
</dbReference>
<dbReference type="InterPro" id="IPR007036">
    <property type="entry name" value="Aste_AspA_hybrid_dom"/>
</dbReference>
<dbReference type="InterPro" id="IPR016681">
    <property type="entry name" value="SuccinylGlu_desuccinylase"/>
</dbReference>
<dbReference type="NCBIfam" id="TIGR03242">
    <property type="entry name" value="arg_catab_astE"/>
    <property type="match status" value="1"/>
</dbReference>
<dbReference type="NCBIfam" id="NF003706">
    <property type="entry name" value="PRK05324.1"/>
    <property type="match status" value="1"/>
</dbReference>
<dbReference type="PANTHER" id="PTHR15162">
    <property type="entry name" value="ASPARTOACYLASE"/>
    <property type="match status" value="1"/>
</dbReference>
<dbReference type="PANTHER" id="PTHR15162:SF7">
    <property type="entry name" value="SUCCINYLGLUTAMATE DESUCCINYLASE"/>
    <property type="match status" value="1"/>
</dbReference>
<dbReference type="Pfam" id="PF24827">
    <property type="entry name" value="AstE_AspA_cat"/>
    <property type="match status" value="1"/>
</dbReference>
<dbReference type="Pfam" id="PF04952">
    <property type="entry name" value="AstE_AspA_hybrid"/>
    <property type="match status" value="1"/>
</dbReference>
<dbReference type="PIRSF" id="PIRSF017020">
    <property type="entry name" value="AstE"/>
    <property type="match status" value="1"/>
</dbReference>
<dbReference type="SUPFAM" id="SSF53187">
    <property type="entry name" value="Zn-dependent exopeptidases"/>
    <property type="match status" value="1"/>
</dbReference>